<reference evidence="5" key="1">
    <citation type="journal article" date="2012" name="Syst. Biol.">
        <title>Peptidomics-based phylogeny and biogeography of Mantophasmatodea (Hexapoda).</title>
        <authorList>
            <person name="Predel R."/>
            <person name="Neupert S."/>
            <person name="Huetteroth W."/>
            <person name="Kahnt J."/>
            <person name="Waidelich D."/>
            <person name="Roth S."/>
        </authorList>
    </citation>
    <scope>PROTEIN SEQUENCE</scope>
    <scope>AMIDATION AT LEU-11</scope>
    <source>
        <tissue evidence="3">Thoracic perisympathetic organs</tissue>
    </source>
</reference>
<comment type="function">
    <text evidence="1">FMRFamides and FMRFamide-like peptides are neuropeptides.</text>
</comment>
<comment type="subcellular location">
    <subcellularLocation>
        <location evidence="6">Secreted</location>
    </subcellularLocation>
</comment>
<comment type="similarity">
    <text evidence="2">Belongs to the FARP (FMRF amide related peptide) family.</text>
</comment>
<name>FAR9_PACBA</name>
<proteinExistence type="evidence at protein level"/>
<accession>B3A0K3</accession>
<protein>
    <recommendedName>
        <fullName evidence="4">Extended FMRFamide-9</fullName>
        <shortName evidence="4">FMRFa-9</shortName>
    </recommendedName>
</protein>
<dbReference type="GO" id="GO:0005576">
    <property type="term" value="C:extracellular region"/>
    <property type="evidence" value="ECO:0007669"/>
    <property type="project" value="UniProtKB-SubCell"/>
</dbReference>
<dbReference type="GO" id="GO:0007218">
    <property type="term" value="P:neuropeptide signaling pathway"/>
    <property type="evidence" value="ECO:0007669"/>
    <property type="project" value="UniProtKB-KW"/>
</dbReference>
<feature type="peptide" id="PRO_0000421544" description="Extended FMRFamide-9" evidence="3">
    <location>
        <begin position="1"/>
        <end position="11"/>
    </location>
</feature>
<feature type="modified residue" description="Leucine amide" evidence="3">
    <location>
        <position position="11"/>
    </location>
</feature>
<feature type="unsure residue" description="L or I" evidence="3">
    <location>
        <position position="11"/>
    </location>
</feature>
<keyword id="KW-0027">Amidation</keyword>
<keyword id="KW-0903">Direct protein sequencing</keyword>
<keyword id="KW-0527">Neuropeptide</keyword>
<keyword id="KW-0964">Secreted</keyword>
<organism>
    <name type="scientific">Pachyphasma brandbergense</name>
    <name type="common">Gladiator</name>
    <name type="synonym">Heel-walker</name>
    <dbReference type="NCBI Taxonomy" id="1041430"/>
    <lineage>
        <taxon>Eukaryota</taxon>
        <taxon>Metazoa</taxon>
        <taxon>Ecdysozoa</taxon>
        <taxon>Arthropoda</taxon>
        <taxon>Hexapoda</taxon>
        <taxon>Insecta</taxon>
        <taxon>Pterygota</taxon>
        <taxon>Neoptera</taxon>
        <taxon>Polyneoptera</taxon>
        <taxon>Mantophasmatodea</taxon>
        <taxon>Mantophasmatidae</taxon>
        <taxon>Pachyphasma</taxon>
    </lineage>
</organism>
<evidence type="ECO:0000250" key="1">
    <source>
        <dbReference type="UniProtKB" id="P34405"/>
    </source>
</evidence>
<evidence type="ECO:0000255" key="2"/>
<evidence type="ECO:0000269" key="3">
    <source>
    </source>
</evidence>
<evidence type="ECO:0000303" key="4">
    <source>
    </source>
</evidence>
<evidence type="ECO:0000305" key="5"/>
<evidence type="ECO:0000305" key="6">
    <source>
    </source>
</evidence>
<sequence length="11" mass="1149">GRGGASNYVRL</sequence>